<dbReference type="EC" id="1.1.1.100"/>
<dbReference type="EMBL" id="X75781">
    <property type="protein sequence ID" value="CAA53417.1"/>
    <property type="molecule type" value="Genomic_DNA"/>
</dbReference>
<dbReference type="EMBL" id="Z28055">
    <property type="protein sequence ID" value="CAA81892.1"/>
    <property type="molecule type" value="Genomic_DNA"/>
</dbReference>
<dbReference type="EMBL" id="BK006944">
    <property type="protein sequence ID" value="DAA09102.1"/>
    <property type="molecule type" value="Genomic_DNA"/>
</dbReference>
<dbReference type="PIR" id="S37877">
    <property type="entry name" value="S37877"/>
</dbReference>
<dbReference type="RefSeq" id="NP_012868.1">
    <property type="nucleotide sequence ID" value="NM_001179621.2"/>
</dbReference>
<dbReference type="PDB" id="4FD3">
    <property type="method" value="X-ray"/>
    <property type="resolution" value="2.60 A"/>
    <property type="chains" value="A/B/C/D/E/F=1-278"/>
</dbReference>
<dbReference type="PDB" id="4FDA">
    <property type="method" value="X-ray"/>
    <property type="resolution" value="2.10 A"/>
    <property type="chains" value="A=1-273"/>
</dbReference>
<dbReference type="PDB" id="4HBG">
    <property type="method" value="X-ray"/>
    <property type="resolution" value="2.27 A"/>
    <property type="chains" value="A=1-278"/>
</dbReference>
<dbReference type="PDBsum" id="4FD3"/>
<dbReference type="PDBsum" id="4FDA"/>
<dbReference type="PDBsum" id="4HBG"/>
<dbReference type="SMR" id="P35731"/>
<dbReference type="BioGRID" id="34078">
    <property type="interactions" value="421"/>
</dbReference>
<dbReference type="DIP" id="DIP-5403N"/>
<dbReference type="FunCoup" id="P35731">
    <property type="interactions" value="195"/>
</dbReference>
<dbReference type="IntAct" id="P35731">
    <property type="interactions" value="2"/>
</dbReference>
<dbReference type="STRING" id="4932.YKL055C"/>
<dbReference type="PaxDb" id="4932-YKL055C"/>
<dbReference type="PeptideAtlas" id="P35731"/>
<dbReference type="TopDownProteomics" id="P35731"/>
<dbReference type="EnsemblFungi" id="YKL055C_mRNA">
    <property type="protein sequence ID" value="YKL055C"/>
    <property type="gene ID" value="YKL055C"/>
</dbReference>
<dbReference type="GeneID" id="853810"/>
<dbReference type="KEGG" id="sce:YKL055C"/>
<dbReference type="AGR" id="SGD:S000001538"/>
<dbReference type="SGD" id="S000001538">
    <property type="gene designation" value="OAR1"/>
</dbReference>
<dbReference type="VEuPathDB" id="FungiDB:YKL055C"/>
<dbReference type="eggNOG" id="KOG0725">
    <property type="taxonomic scope" value="Eukaryota"/>
</dbReference>
<dbReference type="HOGENOM" id="CLU_010194_2_10_1"/>
<dbReference type="InParanoid" id="P35731"/>
<dbReference type="OMA" id="QETETWG"/>
<dbReference type="OrthoDB" id="417891at2759"/>
<dbReference type="BioCyc" id="MetaCyc:YKL055C-MONOMER"/>
<dbReference type="BioCyc" id="YEAST:YKL055C-MONOMER"/>
<dbReference type="BRENDA" id="1.1.1.100">
    <property type="organism ID" value="984"/>
</dbReference>
<dbReference type="Reactome" id="R-SCE-75105">
    <property type="pathway name" value="Fatty acyl-CoA biosynthesis"/>
</dbReference>
<dbReference type="UniPathway" id="UPA00094"/>
<dbReference type="BioGRID-ORCS" id="853810">
    <property type="hits" value="1 hit in 10 CRISPR screens"/>
</dbReference>
<dbReference type="EvolutionaryTrace" id="P35731"/>
<dbReference type="PRO" id="PR:P35731"/>
<dbReference type="Proteomes" id="UP000002311">
    <property type="component" value="Chromosome XI"/>
</dbReference>
<dbReference type="RNAct" id="P35731">
    <property type="molecule type" value="protein"/>
</dbReference>
<dbReference type="GO" id="GO:0005739">
    <property type="term" value="C:mitochondrion"/>
    <property type="evidence" value="ECO:0000315"/>
    <property type="project" value="SGD"/>
</dbReference>
<dbReference type="GO" id="GO:0004316">
    <property type="term" value="F:3-oxoacyl-[acyl-carrier-protein] reductase (NADPH) activity"/>
    <property type="evidence" value="ECO:0000314"/>
    <property type="project" value="SGD"/>
</dbReference>
<dbReference type="GO" id="GO:0016616">
    <property type="term" value="F:oxidoreductase activity, acting on the CH-OH group of donors, NAD or NADP as acceptor"/>
    <property type="evidence" value="ECO:0000318"/>
    <property type="project" value="GO_Central"/>
</dbReference>
<dbReference type="GO" id="GO:0048038">
    <property type="term" value="F:quinone binding"/>
    <property type="evidence" value="ECO:0000318"/>
    <property type="project" value="GO_Central"/>
</dbReference>
<dbReference type="GO" id="GO:0009060">
    <property type="term" value="P:aerobic respiration"/>
    <property type="evidence" value="ECO:0000315"/>
    <property type="project" value="SGD"/>
</dbReference>
<dbReference type="GO" id="GO:0006633">
    <property type="term" value="P:fatty acid biosynthetic process"/>
    <property type="evidence" value="ECO:0000318"/>
    <property type="project" value="GO_Central"/>
</dbReference>
<dbReference type="GO" id="GO:0006631">
    <property type="term" value="P:fatty acid metabolic process"/>
    <property type="evidence" value="ECO:0000315"/>
    <property type="project" value="SGD"/>
</dbReference>
<dbReference type="CDD" id="cd05233">
    <property type="entry name" value="SDR_c"/>
    <property type="match status" value="1"/>
</dbReference>
<dbReference type="FunFam" id="3.40.50.720:FF:000812">
    <property type="entry name" value="3-oxoacyl-[acyl-carrier-protein] reductase"/>
    <property type="match status" value="1"/>
</dbReference>
<dbReference type="Gene3D" id="3.40.50.720">
    <property type="entry name" value="NAD(P)-binding Rossmann-like Domain"/>
    <property type="match status" value="1"/>
</dbReference>
<dbReference type="InterPro" id="IPR036291">
    <property type="entry name" value="NAD(P)-bd_dom_sf"/>
</dbReference>
<dbReference type="InterPro" id="IPR020904">
    <property type="entry name" value="Sc_DH/Rdtase_CS"/>
</dbReference>
<dbReference type="InterPro" id="IPR002347">
    <property type="entry name" value="SDR_fam"/>
</dbReference>
<dbReference type="PANTHER" id="PTHR42760:SF133">
    <property type="entry name" value="3-OXOACYL-[ACYL-CARRIER-PROTEIN] REDUCTASE"/>
    <property type="match status" value="1"/>
</dbReference>
<dbReference type="PANTHER" id="PTHR42760">
    <property type="entry name" value="SHORT-CHAIN DEHYDROGENASES/REDUCTASES FAMILY MEMBER"/>
    <property type="match status" value="1"/>
</dbReference>
<dbReference type="Pfam" id="PF00106">
    <property type="entry name" value="adh_short"/>
    <property type="match status" value="2"/>
</dbReference>
<dbReference type="PRINTS" id="PR00081">
    <property type="entry name" value="GDHRDH"/>
</dbReference>
<dbReference type="PRINTS" id="PR00080">
    <property type="entry name" value="SDRFAMILY"/>
</dbReference>
<dbReference type="SUPFAM" id="SSF51735">
    <property type="entry name" value="NAD(P)-binding Rossmann-fold domains"/>
    <property type="match status" value="1"/>
</dbReference>
<dbReference type="PROSITE" id="PS00061">
    <property type="entry name" value="ADH_SHORT"/>
    <property type="match status" value="1"/>
</dbReference>
<comment type="function">
    <text evidence="1 7">Involved in biosynthesis of fatty acids in mitochondria.</text>
</comment>
<comment type="catalytic activity">
    <reaction>
        <text>a (3R)-hydroxyacyl-[ACP] + NADP(+) = a 3-oxoacyl-[ACP] + NADPH + H(+)</text>
        <dbReference type="Rhea" id="RHEA:17397"/>
        <dbReference type="Rhea" id="RHEA-COMP:9916"/>
        <dbReference type="Rhea" id="RHEA-COMP:9945"/>
        <dbReference type="ChEBI" id="CHEBI:15378"/>
        <dbReference type="ChEBI" id="CHEBI:57783"/>
        <dbReference type="ChEBI" id="CHEBI:58349"/>
        <dbReference type="ChEBI" id="CHEBI:78776"/>
        <dbReference type="ChEBI" id="CHEBI:78827"/>
        <dbReference type="EC" id="1.1.1.100"/>
    </reaction>
</comment>
<comment type="pathway">
    <text>Lipid metabolism; fatty acid biosynthesis.</text>
</comment>
<comment type="subcellular location">
    <subcellularLocation>
        <location evidence="5">Mitochondrion</location>
    </subcellularLocation>
</comment>
<comment type="miscellaneous">
    <text evidence="6">Present with 1760 molecules/cell in log phase SD medium.</text>
</comment>
<comment type="similarity">
    <text evidence="8">Belongs to the short-chain dehydrogenases/reductases (SDR) family.</text>
</comment>
<evidence type="ECO:0000250" key="1"/>
<evidence type="ECO:0000250" key="2">
    <source>
        <dbReference type="UniProtKB" id="L0E2Z4"/>
    </source>
</evidence>
<evidence type="ECO:0000250" key="3">
    <source>
        <dbReference type="UniProtKB" id="O93868"/>
    </source>
</evidence>
<evidence type="ECO:0000255" key="4">
    <source>
        <dbReference type="PROSITE-ProRule" id="PRU10001"/>
    </source>
</evidence>
<evidence type="ECO:0000269" key="5">
    <source>
    </source>
</evidence>
<evidence type="ECO:0000269" key="6">
    <source>
    </source>
</evidence>
<evidence type="ECO:0000269" key="7">
    <source>
    </source>
</evidence>
<evidence type="ECO:0000305" key="8"/>
<evidence type="ECO:0007744" key="9">
    <source>
        <dbReference type="PDB" id="4FD3"/>
    </source>
</evidence>
<evidence type="ECO:0007744" key="10">
    <source>
        <dbReference type="PDB" id="4FDA"/>
    </source>
</evidence>
<evidence type="ECO:0007744" key="11">
    <source>
        <dbReference type="PDB" id="4HBG"/>
    </source>
</evidence>
<evidence type="ECO:0007829" key="12">
    <source>
        <dbReference type="PDB" id="4FD3"/>
    </source>
</evidence>
<evidence type="ECO:0007829" key="13">
    <source>
        <dbReference type="PDB" id="4FDA"/>
    </source>
</evidence>
<evidence type="ECO:0007829" key="14">
    <source>
        <dbReference type="PDB" id="4HBG"/>
    </source>
</evidence>
<name>FABG_YEAST</name>
<protein>
    <recommendedName>
        <fullName>3-oxoacyl-[acyl-carrier-protein] reductase</fullName>
        <ecNumber>1.1.1.100</ecNumber>
    </recommendedName>
    <alternativeName>
        <fullName>3-ketoacyl-acyl carrier protein reductase</fullName>
    </alternativeName>
</protein>
<gene>
    <name type="primary">OAR1</name>
    <name type="ordered locus">YKL055C</name>
</gene>
<keyword id="KW-0002">3D-structure</keyword>
<keyword id="KW-0275">Fatty acid biosynthesis</keyword>
<keyword id="KW-0276">Fatty acid metabolism</keyword>
<keyword id="KW-0444">Lipid biosynthesis</keyword>
<keyword id="KW-0443">Lipid metabolism</keyword>
<keyword id="KW-0496">Mitochondrion</keyword>
<keyword id="KW-0521">NADP</keyword>
<keyword id="KW-0560">Oxidoreductase</keyword>
<keyword id="KW-1185">Reference proteome</keyword>
<sequence length="278" mass="31184">MHYLPVAIVTGATRGIGKAICQKLFQKGLSCIILGSTKESIERTAIDRGQLQSGLSYQRQCAIAIDFKKWPHWLDYESYDGIEYFKDRPPLKQKYSTLFDPCNKWSNNERRYYVNLLINCAGLTQESLSVRTTASQIQDIMNVNFMSPVTMTNICIKYMMKSQRRWPELSGQSARPTIVNISSILHSGKMKVPGTSVYSASKAALSRFTEVLAAEMEPRNIRCFTISPGLVKGTDMIQNLPVEAKEMLERTIGASGTSAPAEIAEEVWSLYSRTALET</sequence>
<reference key="1">
    <citation type="journal article" date="1994" name="Yeast">
        <title>Sequence of a 28.6 kb region of yeast chromosome XI includes the FBA1 and TOA2 genes, an open reading frame (ORF) similar to a translationally controlled tumour protein, one ORF containing motifs also found in plant storage proteins and 13 ORFs with weak or no homology to known proteins.</title>
        <authorList>
            <person name="Rasmussen S.W."/>
        </authorList>
    </citation>
    <scope>NUCLEOTIDE SEQUENCE [GENOMIC DNA]</scope>
    <source>
        <strain>ATCC 204508 / S288c</strain>
    </source>
</reference>
<reference key="2">
    <citation type="journal article" date="1994" name="Nature">
        <title>Complete DNA sequence of yeast chromosome XI.</title>
        <authorList>
            <person name="Dujon B."/>
            <person name="Alexandraki D."/>
            <person name="Andre B."/>
            <person name="Ansorge W."/>
            <person name="Baladron V."/>
            <person name="Ballesta J.P.G."/>
            <person name="Banrevi A."/>
            <person name="Bolle P.-A."/>
            <person name="Bolotin-Fukuhara M."/>
            <person name="Bossier P."/>
            <person name="Bou G."/>
            <person name="Boyer J."/>
            <person name="Buitrago M.J."/>
            <person name="Cheret G."/>
            <person name="Colleaux L."/>
            <person name="Daignan-Fornier B."/>
            <person name="del Rey F."/>
            <person name="Dion C."/>
            <person name="Domdey H."/>
            <person name="Duesterhoeft A."/>
            <person name="Duesterhus S."/>
            <person name="Entian K.-D."/>
            <person name="Erfle H."/>
            <person name="Esteban P.F."/>
            <person name="Feldmann H."/>
            <person name="Fernandes L."/>
            <person name="Fobo G.M."/>
            <person name="Fritz C."/>
            <person name="Fukuhara H."/>
            <person name="Gabel C."/>
            <person name="Gaillon L."/>
            <person name="Garcia-Cantalejo J.M."/>
            <person name="Garcia-Ramirez J.J."/>
            <person name="Gent M.E."/>
            <person name="Ghazvini M."/>
            <person name="Goffeau A."/>
            <person name="Gonzalez A."/>
            <person name="Grothues D."/>
            <person name="Guerreiro P."/>
            <person name="Hegemann J.H."/>
            <person name="Hewitt N."/>
            <person name="Hilger F."/>
            <person name="Hollenberg C.P."/>
            <person name="Horaitis O."/>
            <person name="Indge K.J."/>
            <person name="Jacquier A."/>
            <person name="James C.M."/>
            <person name="Jauniaux J.-C."/>
            <person name="Jimenez A."/>
            <person name="Keuchel H."/>
            <person name="Kirchrath L."/>
            <person name="Kleine K."/>
            <person name="Koetter P."/>
            <person name="Legrain P."/>
            <person name="Liebl S."/>
            <person name="Louis E.J."/>
            <person name="Maia e Silva A."/>
            <person name="Marck C."/>
            <person name="Monnier A.-L."/>
            <person name="Moestl D."/>
            <person name="Mueller S."/>
            <person name="Obermaier B."/>
            <person name="Oliver S.G."/>
            <person name="Pallier C."/>
            <person name="Pascolo S."/>
            <person name="Pfeiffer F."/>
            <person name="Philippsen P."/>
            <person name="Planta R.J."/>
            <person name="Pohl F.M."/>
            <person name="Pohl T.M."/>
            <person name="Poehlmann R."/>
            <person name="Portetelle D."/>
            <person name="Purnelle B."/>
            <person name="Puzos V."/>
            <person name="Ramezani Rad M."/>
            <person name="Rasmussen S.W."/>
            <person name="Remacha M.A."/>
            <person name="Revuelta J.L."/>
            <person name="Richard G.-F."/>
            <person name="Rieger M."/>
            <person name="Rodrigues-Pousada C."/>
            <person name="Rose M."/>
            <person name="Rupp T."/>
            <person name="Santos M.A."/>
            <person name="Schwager C."/>
            <person name="Sensen C."/>
            <person name="Skala J."/>
            <person name="Soares H."/>
            <person name="Sor F."/>
            <person name="Stegemann J."/>
            <person name="Tettelin H."/>
            <person name="Thierry A."/>
            <person name="Tzermia M."/>
            <person name="Urrestarazu L.A."/>
            <person name="van Dyck L."/>
            <person name="van Vliet-Reedijk J.C."/>
            <person name="Valens M."/>
            <person name="Vandenbol M."/>
            <person name="Vilela C."/>
            <person name="Vissers S."/>
            <person name="von Wettstein D."/>
            <person name="Voss H."/>
            <person name="Wiemann S."/>
            <person name="Xu G."/>
            <person name="Zimmermann J."/>
            <person name="Haasemann M."/>
            <person name="Becker I."/>
            <person name="Mewes H.-W."/>
        </authorList>
    </citation>
    <scope>NUCLEOTIDE SEQUENCE [LARGE SCALE GENOMIC DNA]</scope>
    <source>
        <strain>ATCC 204508 / S288c</strain>
    </source>
</reference>
<reference key="3">
    <citation type="journal article" date="2014" name="G3 (Bethesda)">
        <title>The reference genome sequence of Saccharomyces cerevisiae: Then and now.</title>
        <authorList>
            <person name="Engel S.R."/>
            <person name="Dietrich F.S."/>
            <person name="Fisk D.G."/>
            <person name="Binkley G."/>
            <person name="Balakrishnan R."/>
            <person name="Costanzo M.C."/>
            <person name="Dwight S.S."/>
            <person name="Hitz B.C."/>
            <person name="Karra K."/>
            <person name="Nash R.S."/>
            <person name="Weng S."/>
            <person name="Wong E.D."/>
            <person name="Lloyd P."/>
            <person name="Skrzypek M.S."/>
            <person name="Miyasato S.R."/>
            <person name="Simison M."/>
            <person name="Cherry J.M."/>
        </authorList>
    </citation>
    <scope>GENOME REANNOTATION</scope>
    <source>
        <strain>ATCC 204508 / S288c</strain>
    </source>
</reference>
<reference key="4">
    <citation type="journal article" date="1997" name="Curr. Genet.">
        <title>Two genes of the putative mitochondrial fatty acid synthase in the genome of Saccharomyces cerevisiae.</title>
        <authorList>
            <person name="Schneider R."/>
            <person name="Brors B."/>
            <person name="Buerger F."/>
            <person name="Camrath S."/>
            <person name="Weiss H."/>
        </authorList>
    </citation>
    <scope>FUNCTION</scope>
</reference>
<reference key="5">
    <citation type="journal article" date="2003" name="Nature">
        <title>Global analysis of protein localization in budding yeast.</title>
        <authorList>
            <person name="Huh W.-K."/>
            <person name="Falvo J.V."/>
            <person name="Gerke L.C."/>
            <person name="Carroll A.S."/>
            <person name="Howson R.W."/>
            <person name="Weissman J.S."/>
            <person name="O'Shea E.K."/>
        </authorList>
    </citation>
    <scope>SUBCELLULAR LOCATION [LARGE SCALE ANALYSIS]</scope>
</reference>
<reference key="6">
    <citation type="journal article" date="2003" name="Nature">
        <title>Global analysis of protein expression in yeast.</title>
        <authorList>
            <person name="Ghaemmaghami S."/>
            <person name="Huh W.-K."/>
            <person name="Bower K."/>
            <person name="Howson R.W."/>
            <person name="Belle A."/>
            <person name="Dephoure N."/>
            <person name="O'Shea E.K."/>
            <person name="Weissman J.S."/>
        </authorList>
    </citation>
    <scope>LEVEL OF PROTEIN EXPRESSION [LARGE SCALE ANALYSIS]</scope>
</reference>
<reference evidence="9" key="7">
    <citation type="submission" date="2012-05" db="PDB data bank">
        <title>Crystal structure of apo-formed ymtOAR1.</title>
        <authorList>
            <person name="Zhang Y."/>
            <person name="Gao Y."/>
            <person name="Ning F."/>
            <person name="Niu L."/>
            <person name="Teng M."/>
        </authorList>
    </citation>
    <scope>X-RAY CRYSTALLOGRAPHY (2.60 ANGSTROMS)</scope>
</reference>
<reference evidence="10" key="8">
    <citation type="submission" date="2012-05" db="PDB data bank">
        <title>Crystal structure of Saccharomyces cerevisiae 3-oxoacyl-[acyl-carrier-protein] reductase complexed with NADPH.</title>
        <authorList>
            <person name="Yujie Z."/>
            <person name="Yongxiang G."/>
        </authorList>
    </citation>
    <scope>X-RAY CRYSTALLOGRAPHY (2.10 ANGSTROMS) OF 1-273 IN COMPLEX WITH NADP(+)</scope>
</reference>
<reference evidence="11" key="9">
    <citation type="submission" date="2012-09" db="PDB data bank">
        <title>Crystal structure of yeast mitochondria 3-Oxoacyl-ACP Reductase OAR1.</title>
        <authorList>
            <person name="Zhang Y.J."/>
            <person name="Gao Y.X."/>
            <person name="Teng M.K."/>
        </authorList>
    </citation>
    <scope>X-RAY CRYSTALLOGRAPHY (2.27 ANGSTROMS) IN COMPLEX WITH NADPH</scope>
</reference>
<accession>P35731</accession>
<accession>D6VXN2</accession>
<feature type="chain" id="PRO_0000054872" description="3-oxoacyl-[acyl-carrier-protein] reductase">
    <location>
        <begin position="1"/>
        <end position="278"/>
    </location>
</feature>
<feature type="active site" description="Proton donor" evidence="3">
    <location>
        <position position="182"/>
    </location>
</feature>
<feature type="active site" description="Proton acceptor" evidence="4">
    <location>
        <position position="198"/>
    </location>
</feature>
<feature type="active site" description="Lowers pKa of active site Tyr" evidence="3">
    <location>
        <position position="202"/>
    </location>
</feature>
<feature type="binding site" evidence="10 11">
    <location>
        <position position="13"/>
    </location>
    <ligand>
        <name>NADP(+)</name>
        <dbReference type="ChEBI" id="CHEBI:58349"/>
    </ligand>
</feature>
<feature type="binding site" evidence="10 11">
    <location>
        <position position="14"/>
    </location>
    <ligand>
        <name>NADP(+)</name>
        <dbReference type="ChEBI" id="CHEBI:58349"/>
    </ligand>
</feature>
<feature type="binding site" evidence="11">
    <location>
        <position position="16"/>
    </location>
    <ligand>
        <name>NADP(+)</name>
        <dbReference type="ChEBI" id="CHEBI:58349"/>
    </ligand>
</feature>
<feature type="binding site" evidence="10 11">
    <location>
        <position position="36"/>
    </location>
    <ligand>
        <name>NADP(+)</name>
        <dbReference type="ChEBI" id="CHEBI:58349"/>
    </ligand>
</feature>
<feature type="binding site" evidence="10 11">
    <location>
        <position position="40"/>
    </location>
    <ligand>
        <name>NADP(+)</name>
        <dbReference type="ChEBI" id="CHEBI:58349"/>
    </ligand>
</feature>
<feature type="binding site" evidence="2">
    <location>
        <position position="44"/>
    </location>
    <ligand>
        <name>NADP(+)</name>
        <dbReference type="ChEBI" id="CHEBI:58349"/>
    </ligand>
</feature>
<feature type="binding site" evidence="10 11">
    <location>
        <position position="66"/>
    </location>
    <ligand>
        <name>NADP(+)</name>
        <dbReference type="ChEBI" id="CHEBI:58349"/>
    </ligand>
</feature>
<feature type="binding site" evidence="10 11">
    <location>
        <position position="67"/>
    </location>
    <ligand>
        <name>NADP(+)</name>
        <dbReference type="ChEBI" id="CHEBI:58349"/>
    </ligand>
</feature>
<feature type="binding site" evidence="2">
    <location>
        <position position="77"/>
    </location>
    <ligand>
        <name>NADP(+)</name>
        <dbReference type="ChEBI" id="CHEBI:58349"/>
    </ligand>
</feature>
<feature type="binding site" evidence="10 11">
    <location>
        <position position="122"/>
    </location>
    <ligand>
        <name>NADP(+)</name>
        <dbReference type="ChEBI" id="CHEBI:58349"/>
    </ligand>
</feature>
<feature type="binding site" evidence="10">
    <location>
        <position position="125"/>
    </location>
    <ligand>
        <name>NADP(+)</name>
        <dbReference type="ChEBI" id="CHEBI:58349"/>
    </ligand>
</feature>
<feature type="binding site" evidence="10">
    <location>
        <position position="126"/>
    </location>
    <ligand>
        <name>NADP(+)</name>
        <dbReference type="ChEBI" id="CHEBI:58349"/>
    </ligand>
</feature>
<feature type="binding site" evidence="10 11">
    <location>
        <position position="198"/>
    </location>
    <ligand>
        <name>NADP(+)</name>
        <dbReference type="ChEBI" id="CHEBI:58349"/>
    </ligand>
</feature>
<feature type="binding site" evidence="11">
    <location>
        <position position="202"/>
    </location>
    <ligand>
        <name>NADP(+)</name>
        <dbReference type="ChEBI" id="CHEBI:58349"/>
    </ligand>
</feature>
<feature type="binding site" evidence="11">
    <location>
        <position position="230"/>
    </location>
    <ligand>
        <name>NADP(+)</name>
        <dbReference type="ChEBI" id="CHEBI:58349"/>
    </ligand>
</feature>
<feature type="binding site" evidence="3">
    <location>
        <position position="231"/>
    </location>
    <ligand>
        <name>NADP(+)</name>
        <dbReference type="ChEBI" id="CHEBI:58349"/>
    </ligand>
</feature>
<feature type="strand" evidence="13">
    <location>
        <begin position="2"/>
        <end position="11"/>
    </location>
</feature>
<feature type="helix" evidence="13">
    <location>
        <begin position="15"/>
        <end position="26"/>
    </location>
</feature>
<feature type="strand" evidence="13">
    <location>
        <begin position="30"/>
        <end position="37"/>
    </location>
</feature>
<feature type="helix" evidence="13">
    <location>
        <begin position="38"/>
        <end position="42"/>
    </location>
</feature>
<feature type="helix" evidence="13">
    <location>
        <begin position="49"/>
        <end position="52"/>
    </location>
</feature>
<feature type="strand" evidence="13">
    <location>
        <begin position="60"/>
        <end position="64"/>
    </location>
</feature>
<feature type="helix" evidence="13">
    <location>
        <begin position="67"/>
        <end position="69"/>
    </location>
</feature>
<feature type="helix" evidence="13">
    <location>
        <begin position="72"/>
        <end position="75"/>
    </location>
</feature>
<feature type="strand" evidence="13">
    <location>
        <begin position="79"/>
        <end position="84"/>
    </location>
</feature>
<feature type="strand" evidence="13">
    <location>
        <begin position="86"/>
        <end position="88"/>
    </location>
</feature>
<feature type="strand" evidence="13">
    <location>
        <begin position="91"/>
        <end position="97"/>
    </location>
</feature>
<feature type="helix" evidence="13">
    <location>
        <begin position="100"/>
        <end position="105"/>
    </location>
</feature>
<feature type="strand" evidence="13">
    <location>
        <begin position="108"/>
        <end position="119"/>
    </location>
</feature>
<feature type="helix" evidence="13">
    <location>
        <begin position="129"/>
        <end position="131"/>
    </location>
</feature>
<feature type="helix" evidence="13">
    <location>
        <begin position="134"/>
        <end position="144"/>
    </location>
</feature>
<feature type="helix" evidence="13">
    <location>
        <begin position="146"/>
        <end position="165"/>
    </location>
</feature>
<feature type="helix" evidence="13">
    <location>
        <begin position="167"/>
        <end position="171"/>
    </location>
</feature>
<feature type="strand" evidence="12">
    <location>
        <begin position="172"/>
        <end position="174"/>
    </location>
</feature>
<feature type="strand" evidence="13">
    <location>
        <begin position="177"/>
        <end position="181"/>
    </location>
</feature>
<feature type="helix" evidence="13">
    <location>
        <begin position="184"/>
        <end position="186"/>
    </location>
</feature>
<feature type="strand" evidence="13">
    <location>
        <begin position="187"/>
        <end position="189"/>
    </location>
</feature>
<feature type="helix" evidence="13">
    <location>
        <begin position="196"/>
        <end position="216"/>
    </location>
</feature>
<feature type="helix" evidence="13">
    <location>
        <begin position="217"/>
        <end position="219"/>
    </location>
</feature>
<feature type="strand" evidence="13">
    <location>
        <begin position="222"/>
        <end position="226"/>
    </location>
</feature>
<feature type="helix" evidence="14">
    <location>
        <begin position="246"/>
        <end position="251"/>
    </location>
</feature>
<feature type="helix" evidence="13">
    <location>
        <begin position="260"/>
        <end position="272"/>
    </location>
</feature>
<organism>
    <name type="scientific">Saccharomyces cerevisiae (strain ATCC 204508 / S288c)</name>
    <name type="common">Baker's yeast</name>
    <dbReference type="NCBI Taxonomy" id="559292"/>
    <lineage>
        <taxon>Eukaryota</taxon>
        <taxon>Fungi</taxon>
        <taxon>Dikarya</taxon>
        <taxon>Ascomycota</taxon>
        <taxon>Saccharomycotina</taxon>
        <taxon>Saccharomycetes</taxon>
        <taxon>Saccharomycetales</taxon>
        <taxon>Saccharomycetaceae</taxon>
        <taxon>Saccharomyces</taxon>
    </lineage>
</organism>
<proteinExistence type="evidence at protein level"/>